<feature type="chain" id="PRO_0000407618" description="Methionine aminopeptidase 2-1">
    <location>
        <begin position="1"/>
        <end position="467"/>
    </location>
</feature>
<feature type="region of interest" description="Disordered" evidence="2">
    <location>
        <begin position="1"/>
        <end position="105"/>
    </location>
</feature>
<feature type="compositionally biased region" description="Basic and acidic residues" evidence="2">
    <location>
        <begin position="1"/>
        <end position="10"/>
    </location>
</feature>
<feature type="compositionally biased region" description="Acidic residues" evidence="2">
    <location>
        <begin position="43"/>
        <end position="55"/>
    </location>
</feature>
<feature type="compositionally biased region" description="Basic residues" evidence="2">
    <location>
        <begin position="75"/>
        <end position="90"/>
    </location>
</feature>
<feature type="binding site" evidence="1">
    <location>
        <position position="219"/>
    </location>
    <ligand>
        <name>substrate</name>
    </ligand>
</feature>
<feature type="binding site" evidence="1">
    <location>
        <position position="240"/>
    </location>
    <ligand>
        <name>a divalent metal cation</name>
        <dbReference type="ChEBI" id="CHEBI:60240"/>
        <label>1</label>
    </ligand>
</feature>
<feature type="binding site" evidence="1">
    <location>
        <position position="251"/>
    </location>
    <ligand>
        <name>a divalent metal cation</name>
        <dbReference type="ChEBI" id="CHEBI:60240"/>
        <label>1</label>
    </ligand>
</feature>
<feature type="binding site" evidence="1">
    <location>
        <position position="251"/>
    </location>
    <ligand>
        <name>a divalent metal cation</name>
        <dbReference type="ChEBI" id="CHEBI:60240"/>
        <label>2</label>
        <note>catalytic</note>
    </ligand>
</feature>
<feature type="binding site" evidence="1">
    <location>
        <position position="320"/>
    </location>
    <ligand>
        <name>a divalent metal cation</name>
        <dbReference type="ChEBI" id="CHEBI:60240"/>
        <label>2</label>
        <note>catalytic</note>
    </ligand>
</feature>
<feature type="binding site" evidence="1">
    <location>
        <position position="328"/>
    </location>
    <ligand>
        <name>substrate</name>
    </ligand>
</feature>
<feature type="binding site" evidence="1">
    <location>
        <position position="353"/>
    </location>
    <ligand>
        <name>a divalent metal cation</name>
        <dbReference type="ChEBI" id="CHEBI:60240"/>
        <label>2</label>
        <note>catalytic</note>
    </ligand>
</feature>
<feature type="binding site" evidence="1">
    <location>
        <position position="448"/>
    </location>
    <ligand>
        <name>a divalent metal cation</name>
        <dbReference type="ChEBI" id="CHEBI:60240"/>
        <label>1</label>
    </ligand>
</feature>
<feature type="binding site" evidence="1">
    <location>
        <position position="448"/>
    </location>
    <ligand>
        <name>a divalent metal cation</name>
        <dbReference type="ChEBI" id="CHEBI:60240"/>
        <label>2</label>
        <note>catalytic</note>
    </ligand>
</feature>
<reference key="1">
    <citation type="journal article" date="2012" name="MBio">
        <title>Comparative genome analysis of Trichophyton rubrum and related dermatophytes reveals candidate genes involved in infection.</title>
        <authorList>
            <person name="Martinez D.A."/>
            <person name="Oliver B.G."/>
            <person name="Graeser Y."/>
            <person name="Goldberg J.M."/>
            <person name="Li W."/>
            <person name="Martinez-Rossi N.M."/>
            <person name="Monod M."/>
            <person name="Shelest E."/>
            <person name="Barton R.C."/>
            <person name="Birch E."/>
            <person name="Brakhage A.A."/>
            <person name="Chen Z."/>
            <person name="Gurr S.J."/>
            <person name="Heiman D."/>
            <person name="Heitman J."/>
            <person name="Kosti I."/>
            <person name="Rossi A."/>
            <person name="Saif S."/>
            <person name="Samalova M."/>
            <person name="Saunders C.W."/>
            <person name="Shea T."/>
            <person name="Summerbell R.C."/>
            <person name="Xu J."/>
            <person name="Young S."/>
            <person name="Zeng Q."/>
            <person name="Birren B.W."/>
            <person name="Cuomo C.A."/>
            <person name="White T.C."/>
        </authorList>
    </citation>
    <scope>NUCLEOTIDE SEQUENCE [LARGE SCALE GENOMIC DNA]</scope>
    <source>
        <strain>ATCC MYA-4604 / CBS 118893</strain>
    </source>
</reference>
<accession>E5R278</accession>
<keyword id="KW-0031">Aminopeptidase</keyword>
<keyword id="KW-0963">Cytoplasm</keyword>
<keyword id="KW-0378">Hydrolase</keyword>
<keyword id="KW-0479">Metal-binding</keyword>
<keyword id="KW-0645">Protease</keyword>
<keyword id="KW-1185">Reference proteome</keyword>
<dbReference type="EC" id="3.4.11.18" evidence="1"/>
<dbReference type="EMBL" id="DS989822">
    <property type="protein sequence ID" value="EFQ98642.1"/>
    <property type="molecule type" value="Genomic_DNA"/>
</dbReference>
<dbReference type="RefSeq" id="XP_003177594.1">
    <property type="nucleotide sequence ID" value="XM_003177546.1"/>
</dbReference>
<dbReference type="SMR" id="E5R278"/>
<dbReference type="STRING" id="535722.E5R278"/>
<dbReference type="GeneID" id="10032929"/>
<dbReference type="VEuPathDB" id="FungiDB:MGYG_01664"/>
<dbReference type="eggNOG" id="KOG2775">
    <property type="taxonomic scope" value="Eukaryota"/>
</dbReference>
<dbReference type="HOGENOM" id="CLU_015857_7_1_1"/>
<dbReference type="InParanoid" id="E5R278"/>
<dbReference type="OMA" id="ILRYHIH"/>
<dbReference type="OrthoDB" id="7848262at2759"/>
<dbReference type="Proteomes" id="UP000002669">
    <property type="component" value="Unassembled WGS sequence"/>
</dbReference>
<dbReference type="GO" id="GO:0005737">
    <property type="term" value="C:cytoplasm"/>
    <property type="evidence" value="ECO:0007669"/>
    <property type="project" value="UniProtKB-SubCell"/>
</dbReference>
<dbReference type="GO" id="GO:0004239">
    <property type="term" value="F:initiator methionyl aminopeptidase activity"/>
    <property type="evidence" value="ECO:0007669"/>
    <property type="project" value="UniProtKB-UniRule"/>
</dbReference>
<dbReference type="GO" id="GO:0046872">
    <property type="term" value="F:metal ion binding"/>
    <property type="evidence" value="ECO:0007669"/>
    <property type="project" value="UniProtKB-UniRule"/>
</dbReference>
<dbReference type="GO" id="GO:0070006">
    <property type="term" value="F:metalloaminopeptidase activity"/>
    <property type="evidence" value="ECO:0007669"/>
    <property type="project" value="UniProtKB-UniRule"/>
</dbReference>
<dbReference type="GO" id="GO:0006508">
    <property type="term" value="P:proteolysis"/>
    <property type="evidence" value="ECO:0007669"/>
    <property type="project" value="UniProtKB-KW"/>
</dbReference>
<dbReference type="CDD" id="cd01088">
    <property type="entry name" value="MetAP2"/>
    <property type="match status" value="1"/>
</dbReference>
<dbReference type="Gene3D" id="3.90.230.10">
    <property type="entry name" value="Creatinase/methionine aminopeptidase superfamily"/>
    <property type="match status" value="1"/>
</dbReference>
<dbReference type="Gene3D" id="1.10.10.10">
    <property type="entry name" value="Winged helix-like DNA-binding domain superfamily/Winged helix DNA-binding domain"/>
    <property type="match status" value="1"/>
</dbReference>
<dbReference type="HAMAP" id="MF_03175">
    <property type="entry name" value="MetAP_2_euk"/>
    <property type="match status" value="1"/>
</dbReference>
<dbReference type="InterPro" id="IPR036005">
    <property type="entry name" value="Creatinase/aminopeptidase-like"/>
</dbReference>
<dbReference type="InterPro" id="IPR050247">
    <property type="entry name" value="Met_Aminopeptidase_Type2"/>
</dbReference>
<dbReference type="InterPro" id="IPR000994">
    <property type="entry name" value="Pept_M24"/>
</dbReference>
<dbReference type="InterPro" id="IPR001714">
    <property type="entry name" value="Pept_M24_MAP"/>
</dbReference>
<dbReference type="InterPro" id="IPR002468">
    <property type="entry name" value="Pept_M24A_MAP2"/>
</dbReference>
<dbReference type="InterPro" id="IPR018349">
    <property type="entry name" value="Pept_M24A_MAP2_BS"/>
</dbReference>
<dbReference type="InterPro" id="IPR036388">
    <property type="entry name" value="WH-like_DNA-bd_sf"/>
</dbReference>
<dbReference type="InterPro" id="IPR036390">
    <property type="entry name" value="WH_DNA-bd_sf"/>
</dbReference>
<dbReference type="NCBIfam" id="TIGR00501">
    <property type="entry name" value="met_pdase_II"/>
    <property type="match status" value="1"/>
</dbReference>
<dbReference type="PANTHER" id="PTHR45777">
    <property type="entry name" value="METHIONINE AMINOPEPTIDASE 2"/>
    <property type="match status" value="1"/>
</dbReference>
<dbReference type="PANTHER" id="PTHR45777:SF1">
    <property type="entry name" value="METHIONINE AMINOPEPTIDASE 2-2"/>
    <property type="match status" value="1"/>
</dbReference>
<dbReference type="Pfam" id="PF00557">
    <property type="entry name" value="Peptidase_M24"/>
    <property type="match status" value="1"/>
</dbReference>
<dbReference type="PRINTS" id="PR00599">
    <property type="entry name" value="MAPEPTIDASE"/>
</dbReference>
<dbReference type="SUPFAM" id="SSF55920">
    <property type="entry name" value="Creatinase/aminopeptidase"/>
    <property type="match status" value="1"/>
</dbReference>
<dbReference type="SUPFAM" id="SSF46785">
    <property type="entry name" value="Winged helix' DNA-binding domain"/>
    <property type="match status" value="1"/>
</dbReference>
<dbReference type="PROSITE" id="PS01202">
    <property type="entry name" value="MAP_2"/>
    <property type="match status" value="1"/>
</dbReference>
<comment type="function">
    <text evidence="1">Cotranslationally removes the N-terminal methionine from nascent proteins. The N-terminal methionine is often cleaved when the second residue in the primary sequence is small and uncharged (Met-Ala-, Cys, Gly, Pro, Ser, Thr, or Val).</text>
</comment>
<comment type="catalytic activity">
    <reaction evidence="1">
        <text>Release of N-terminal amino acids, preferentially methionine, from peptides and arylamides.</text>
        <dbReference type="EC" id="3.4.11.18"/>
    </reaction>
</comment>
<comment type="cofactor">
    <cofactor evidence="1">
        <name>Co(2+)</name>
        <dbReference type="ChEBI" id="CHEBI:48828"/>
    </cofactor>
    <cofactor evidence="1">
        <name>Zn(2+)</name>
        <dbReference type="ChEBI" id="CHEBI:29105"/>
    </cofactor>
    <cofactor evidence="1">
        <name>Mn(2+)</name>
        <dbReference type="ChEBI" id="CHEBI:29035"/>
    </cofactor>
    <cofactor evidence="1">
        <name>Fe(2+)</name>
        <dbReference type="ChEBI" id="CHEBI:29033"/>
    </cofactor>
    <text evidence="1">Binds 2 divalent metal cations per subunit. Has a high-affinity and a low affinity metal-binding site. The true nature of the physiological cofactor is under debate. The enzyme is active with cobalt, zinc, manganese or divalent iron ions. Most likely, methionine aminopeptidases function as mononuclear Fe(2+)-metalloproteases under physiological conditions, and the catalytically relevant metal-binding site has been assigned to the histidine-containing high-affinity site.</text>
</comment>
<comment type="subcellular location">
    <subcellularLocation>
        <location evidence="1">Cytoplasm</location>
    </subcellularLocation>
</comment>
<comment type="similarity">
    <text evidence="1">Belongs to the peptidase M24A family. Methionine aminopeptidase eukaryotic type 2 subfamily.</text>
</comment>
<gene>
    <name type="ORF">MGYG_01664</name>
</gene>
<name>MAP21_ARTGP</name>
<proteinExistence type="inferred from homology"/>
<protein>
    <recommendedName>
        <fullName evidence="1">Methionine aminopeptidase 2-1</fullName>
        <shortName evidence="1">MAP 2-1</shortName>
        <shortName evidence="1">MetAP 2-1</shortName>
        <ecNumber evidence="1">3.4.11.18</ecNumber>
    </recommendedName>
    <alternativeName>
        <fullName evidence="1">Peptidase M</fullName>
    </alternativeName>
</protein>
<evidence type="ECO:0000255" key="1">
    <source>
        <dbReference type="HAMAP-Rule" id="MF_03175"/>
    </source>
</evidence>
<evidence type="ECO:0000256" key="2">
    <source>
        <dbReference type="SAM" id="MobiDB-lite"/>
    </source>
</evidence>
<sequence>MGSKSPDGHRQGPNAESPSSSVAATTNPPKPAAASGLVQGMLDGDDEDEDGDDDGDNQRIGADLKSGVLPNNDGKKRKRKSNKKKKKKTSKGQQTTPPRVSLPSIFHDQRYPEGEIVEYAARNDNLQRTTAEELRHQAAIHNMDDEFLTDYRQAAEVHRQVRQYVQSIAKPGILMSELAEEIETGVRALTGHQGIETGDALKAGLAFPTGLCLNNVAAHWTPNPGAKEVILKHDDVLKIDFGVHVNGRIVDSAFTVASNPVYDNLLTAVKAATNTGLKEAGIDARIDHISGEIQEVMESYEVEINGKAIPVKALRSLTGHNILRYKIHGEKQVPFVKSKTTQRMEEGDVFAIETFGSTGKGYTRDEVGVYGYGLNEHASTAGLHHASAKSLLKTIRENFGTLVFSRRYLEHMGVKNYHLGMRSLISNDIVECYAPLVDVPGSYVAQFEHTVLLRPNCKEIISRGDDY</sequence>
<organism>
    <name type="scientific">Arthroderma gypseum (strain ATCC MYA-4604 / CBS 118893)</name>
    <name type="common">Microsporum gypseum</name>
    <dbReference type="NCBI Taxonomy" id="535722"/>
    <lineage>
        <taxon>Eukaryota</taxon>
        <taxon>Fungi</taxon>
        <taxon>Dikarya</taxon>
        <taxon>Ascomycota</taxon>
        <taxon>Pezizomycotina</taxon>
        <taxon>Eurotiomycetes</taxon>
        <taxon>Eurotiomycetidae</taxon>
        <taxon>Onygenales</taxon>
        <taxon>Arthrodermataceae</taxon>
        <taxon>Nannizzia</taxon>
    </lineage>
</organism>